<dbReference type="EC" id="2.5.1.-" evidence="1"/>
<dbReference type="EMBL" id="AM181176">
    <property type="protein sequence ID" value="CAY47330.1"/>
    <property type="molecule type" value="Genomic_DNA"/>
</dbReference>
<dbReference type="RefSeq" id="WP_012722407.1">
    <property type="nucleotide sequence ID" value="NC_012660.1"/>
</dbReference>
<dbReference type="SMR" id="C3K6Z3"/>
<dbReference type="STRING" id="294.SRM1_04621"/>
<dbReference type="PATRIC" id="fig|216595.4.peg.1301"/>
<dbReference type="eggNOG" id="COG0500">
    <property type="taxonomic scope" value="Bacteria"/>
</dbReference>
<dbReference type="HOGENOM" id="CLU_052665_0_0_6"/>
<dbReference type="OrthoDB" id="9773188at2"/>
<dbReference type="GO" id="GO:0008168">
    <property type="term" value="F:methyltransferase activity"/>
    <property type="evidence" value="ECO:0007669"/>
    <property type="project" value="TreeGrafter"/>
</dbReference>
<dbReference type="GO" id="GO:0016765">
    <property type="term" value="F:transferase activity, transferring alkyl or aryl (other than methyl) groups"/>
    <property type="evidence" value="ECO:0007669"/>
    <property type="project" value="UniProtKB-UniRule"/>
</dbReference>
<dbReference type="GO" id="GO:0002098">
    <property type="term" value="P:tRNA wobble uridine modification"/>
    <property type="evidence" value="ECO:0007669"/>
    <property type="project" value="InterPro"/>
</dbReference>
<dbReference type="CDD" id="cd02440">
    <property type="entry name" value="AdoMet_MTases"/>
    <property type="match status" value="1"/>
</dbReference>
<dbReference type="Gene3D" id="3.40.50.150">
    <property type="entry name" value="Vaccinia Virus protein VP39"/>
    <property type="match status" value="1"/>
</dbReference>
<dbReference type="HAMAP" id="MF_01590">
    <property type="entry name" value="tRNA_carboxymethyltr_CmoB"/>
    <property type="match status" value="1"/>
</dbReference>
<dbReference type="InterPro" id="IPR010017">
    <property type="entry name" value="CmoB"/>
</dbReference>
<dbReference type="InterPro" id="IPR027555">
    <property type="entry name" value="Mo5U34_MeTrfas-like"/>
</dbReference>
<dbReference type="InterPro" id="IPR029063">
    <property type="entry name" value="SAM-dependent_MTases_sf"/>
</dbReference>
<dbReference type="NCBIfam" id="NF011650">
    <property type="entry name" value="PRK15068.1"/>
    <property type="match status" value="1"/>
</dbReference>
<dbReference type="NCBIfam" id="TIGR00452">
    <property type="entry name" value="tRNA 5-methoxyuridine(34)/uridine 5-oxyacetic acid(34) synthase CmoB"/>
    <property type="match status" value="1"/>
</dbReference>
<dbReference type="PANTHER" id="PTHR43464">
    <property type="entry name" value="METHYLTRANSFERASE"/>
    <property type="match status" value="1"/>
</dbReference>
<dbReference type="PANTHER" id="PTHR43464:SF95">
    <property type="entry name" value="TRNA U34 CARBOXYMETHYLTRANSFERASE"/>
    <property type="match status" value="1"/>
</dbReference>
<dbReference type="Pfam" id="PF08003">
    <property type="entry name" value="Methyltransf_9"/>
    <property type="match status" value="1"/>
</dbReference>
<dbReference type="SUPFAM" id="SSF53335">
    <property type="entry name" value="S-adenosyl-L-methionine-dependent methyltransferases"/>
    <property type="match status" value="1"/>
</dbReference>
<comment type="function">
    <text evidence="1">Catalyzes carboxymethyl transfer from carboxy-S-adenosyl-L-methionine (Cx-SAM) to 5-hydroxyuridine (ho5U) to form 5-carboxymethoxyuridine (cmo5U) at position 34 in tRNAs.</text>
</comment>
<comment type="catalytic activity">
    <reaction evidence="1">
        <text>carboxy-S-adenosyl-L-methionine + 5-hydroxyuridine(34) in tRNA = 5-carboxymethoxyuridine(34) in tRNA + S-adenosyl-L-homocysteine + H(+)</text>
        <dbReference type="Rhea" id="RHEA:52848"/>
        <dbReference type="Rhea" id="RHEA-COMP:13381"/>
        <dbReference type="Rhea" id="RHEA-COMP:13383"/>
        <dbReference type="ChEBI" id="CHEBI:15378"/>
        <dbReference type="ChEBI" id="CHEBI:57856"/>
        <dbReference type="ChEBI" id="CHEBI:134278"/>
        <dbReference type="ChEBI" id="CHEBI:136877"/>
        <dbReference type="ChEBI" id="CHEBI:136879"/>
    </reaction>
</comment>
<comment type="subunit">
    <text evidence="1">Homotetramer.</text>
</comment>
<comment type="similarity">
    <text evidence="1">Belongs to the class I-like SAM-binding methyltransferase superfamily. CmoB family.</text>
</comment>
<protein>
    <recommendedName>
        <fullName evidence="1">tRNA U34 carboxymethyltransferase</fullName>
        <ecNumber evidence="1">2.5.1.-</ecNumber>
    </recommendedName>
</protein>
<name>CMOB_PSEFS</name>
<reference key="1">
    <citation type="journal article" date="2009" name="Genome Biol.">
        <title>Genomic and genetic analyses of diversity and plant interactions of Pseudomonas fluorescens.</title>
        <authorList>
            <person name="Silby M.W."/>
            <person name="Cerdeno-Tarraga A.M."/>
            <person name="Vernikos G.S."/>
            <person name="Giddens S.R."/>
            <person name="Jackson R.W."/>
            <person name="Preston G.M."/>
            <person name="Zhang X.-X."/>
            <person name="Moon C.D."/>
            <person name="Gehrig S.M."/>
            <person name="Godfrey S.A.C."/>
            <person name="Knight C.G."/>
            <person name="Malone J.G."/>
            <person name="Robinson Z."/>
            <person name="Spiers A.J."/>
            <person name="Harris S."/>
            <person name="Challis G.L."/>
            <person name="Yaxley A.M."/>
            <person name="Harris D."/>
            <person name="Seeger K."/>
            <person name="Murphy L."/>
            <person name="Rutter S."/>
            <person name="Squares R."/>
            <person name="Quail M.A."/>
            <person name="Saunders E."/>
            <person name="Mavromatis K."/>
            <person name="Brettin T.S."/>
            <person name="Bentley S.D."/>
            <person name="Hothersall J."/>
            <person name="Stephens E."/>
            <person name="Thomas C.M."/>
            <person name="Parkhill J."/>
            <person name="Levy S.B."/>
            <person name="Rainey P.B."/>
            <person name="Thomson N.R."/>
        </authorList>
    </citation>
    <scope>NUCLEOTIDE SEQUENCE [LARGE SCALE GENOMIC DNA]</scope>
    <source>
        <strain>SBW25</strain>
    </source>
</reference>
<keyword id="KW-0808">Transferase</keyword>
<keyword id="KW-0819">tRNA processing</keyword>
<gene>
    <name evidence="1" type="primary">cmoB</name>
    <name type="ordered locus">PFLU_1066</name>
</gene>
<evidence type="ECO:0000255" key="1">
    <source>
        <dbReference type="HAMAP-Rule" id="MF_01590"/>
    </source>
</evidence>
<sequence>MIDLSPLARHLVGTPLAVWAQGLQAQLDSKMEKGHGDLDRWQSALDALPNIQPSEVDLLNDLALDTDCDDATRAQMRTALMGLCPWRKGPFHLFGVHVDTEWRSDWKWSRVAPHLDLKGKRILDVGCGNGYYMWRMLGAGADSVIGVDPNWLFFCQFQAVQRYLSEPKAWHLPFPFEDLPANLEGFDTVFSMGVFYHRRSPIEHLLALKDTLVKGGELVLETLVVEGDQQQVLVPEDRYAQMRNVWFLPSVPALMLWLRRAGFSDVRCVDVSVTTVEEQRGTEWMKYQSLSDFLDPEDHSKTLEGLPAPMRAVIIAKK</sequence>
<proteinExistence type="inferred from homology"/>
<accession>C3K6Z3</accession>
<feature type="chain" id="PRO_1000215646" description="tRNA U34 carboxymethyltransferase">
    <location>
        <begin position="1"/>
        <end position="318"/>
    </location>
</feature>
<feature type="binding site" evidence="1">
    <location>
        <position position="88"/>
    </location>
    <ligand>
        <name>carboxy-S-adenosyl-L-methionine</name>
        <dbReference type="ChEBI" id="CHEBI:134278"/>
    </ligand>
</feature>
<feature type="binding site" evidence="1">
    <location>
        <position position="102"/>
    </location>
    <ligand>
        <name>carboxy-S-adenosyl-L-methionine</name>
        <dbReference type="ChEBI" id="CHEBI:134278"/>
    </ligand>
</feature>
<feature type="binding site" evidence="1">
    <location>
        <position position="107"/>
    </location>
    <ligand>
        <name>carboxy-S-adenosyl-L-methionine</name>
        <dbReference type="ChEBI" id="CHEBI:134278"/>
    </ligand>
</feature>
<feature type="binding site" evidence="1">
    <location>
        <position position="126"/>
    </location>
    <ligand>
        <name>carboxy-S-adenosyl-L-methionine</name>
        <dbReference type="ChEBI" id="CHEBI:134278"/>
    </ligand>
</feature>
<feature type="binding site" evidence="1">
    <location>
        <position position="192"/>
    </location>
    <ligand>
        <name>carboxy-S-adenosyl-L-methionine</name>
        <dbReference type="ChEBI" id="CHEBI:134278"/>
    </ligand>
</feature>
<feature type="binding site" evidence="1">
    <location>
        <position position="196"/>
    </location>
    <ligand>
        <name>carboxy-S-adenosyl-L-methionine</name>
        <dbReference type="ChEBI" id="CHEBI:134278"/>
    </ligand>
</feature>
<feature type="binding site" evidence="1">
    <location>
        <position position="311"/>
    </location>
    <ligand>
        <name>carboxy-S-adenosyl-L-methionine</name>
        <dbReference type="ChEBI" id="CHEBI:134278"/>
    </ligand>
</feature>
<organism>
    <name type="scientific">Pseudomonas fluorescens (strain SBW25)</name>
    <dbReference type="NCBI Taxonomy" id="216595"/>
    <lineage>
        <taxon>Bacteria</taxon>
        <taxon>Pseudomonadati</taxon>
        <taxon>Pseudomonadota</taxon>
        <taxon>Gammaproteobacteria</taxon>
        <taxon>Pseudomonadales</taxon>
        <taxon>Pseudomonadaceae</taxon>
        <taxon>Pseudomonas</taxon>
    </lineage>
</organism>